<dbReference type="EMBL" id="CP000919">
    <property type="protein sequence ID" value="ACO19903.1"/>
    <property type="molecule type" value="Genomic_DNA"/>
</dbReference>
<dbReference type="SMR" id="C1CFF1"/>
<dbReference type="KEGG" id="sjj:SPJ_1474"/>
<dbReference type="HOGENOM" id="CLU_033732_3_0_9"/>
<dbReference type="Proteomes" id="UP000002206">
    <property type="component" value="Chromosome"/>
</dbReference>
<dbReference type="GO" id="GO:0005829">
    <property type="term" value="C:cytosol"/>
    <property type="evidence" value="ECO:0007669"/>
    <property type="project" value="TreeGrafter"/>
</dbReference>
<dbReference type="GO" id="GO:0005525">
    <property type="term" value="F:GTP binding"/>
    <property type="evidence" value="ECO:0007669"/>
    <property type="project" value="UniProtKB-UniRule"/>
</dbReference>
<dbReference type="GO" id="GO:0046872">
    <property type="term" value="F:metal ion binding"/>
    <property type="evidence" value="ECO:0007669"/>
    <property type="project" value="UniProtKB-KW"/>
</dbReference>
<dbReference type="GO" id="GO:0000917">
    <property type="term" value="P:division septum assembly"/>
    <property type="evidence" value="ECO:0007669"/>
    <property type="project" value="UniProtKB-KW"/>
</dbReference>
<dbReference type="CDD" id="cd01876">
    <property type="entry name" value="YihA_EngB"/>
    <property type="match status" value="1"/>
</dbReference>
<dbReference type="FunFam" id="3.40.50.300:FF:000098">
    <property type="entry name" value="Probable GTP-binding protein EngB"/>
    <property type="match status" value="1"/>
</dbReference>
<dbReference type="Gene3D" id="3.40.50.300">
    <property type="entry name" value="P-loop containing nucleotide triphosphate hydrolases"/>
    <property type="match status" value="1"/>
</dbReference>
<dbReference type="HAMAP" id="MF_00321">
    <property type="entry name" value="GTPase_EngB"/>
    <property type="match status" value="1"/>
</dbReference>
<dbReference type="InterPro" id="IPR030393">
    <property type="entry name" value="G_ENGB_dom"/>
</dbReference>
<dbReference type="InterPro" id="IPR006073">
    <property type="entry name" value="GTP-bd"/>
</dbReference>
<dbReference type="InterPro" id="IPR019987">
    <property type="entry name" value="GTP-bd_ribosome_bio_YsxC"/>
</dbReference>
<dbReference type="InterPro" id="IPR027417">
    <property type="entry name" value="P-loop_NTPase"/>
</dbReference>
<dbReference type="NCBIfam" id="TIGR03598">
    <property type="entry name" value="GTPase_YsxC"/>
    <property type="match status" value="1"/>
</dbReference>
<dbReference type="PANTHER" id="PTHR11649:SF13">
    <property type="entry name" value="ENGB-TYPE G DOMAIN-CONTAINING PROTEIN"/>
    <property type="match status" value="1"/>
</dbReference>
<dbReference type="PANTHER" id="PTHR11649">
    <property type="entry name" value="MSS1/TRME-RELATED GTP-BINDING PROTEIN"/>
    <property type="match status" value="1"/>
</dbReference>
<dbReference type="Pfam" id="PF01926">
    <property type="entry name" value="MMR_HSR1"/>
    <property type="match status" value="1"/>
</dbReference>
<dbReference type="PRINTS" id="PR00449">
    <property type="entry name" value="RASTRNSFRMNG"/>
</dbReference>
<dbReference type="SUPFAM" id="SSF52540">
    <property type="entry name" value="P-loop containing nucleoside triphosphate hydrolases"/>
    <property type="match status" value="1"/>
</dbReference>
<dbReference type="PROSITE" id="PS51706">
    <property type="entry name" value="G_ENGB"/>
    <property type="match status" value="1"/>
</dbReference>
<protein>
    <recommendedName>
        <fullName evidence="1">Probable GTP-binding protein EngB</fullName>
    </recommendedName>
</protein>
<gene>
    <name evidence="1" type="primary">engB</name>
    <name type="ordered locus">SPJ_1474</name>
</gene>
<evidence type="ECO:0000255" key="1">
    <source>
        <dbReference type="HAMAP-Rule" id="MF_00321"/>
    </source>
</evidence>
<comment type="function">
    <text evidence="1">Necessary for normal cell division and for the maintenance of normal septation.</text>
</comment>
<comment type="cofactor">
    <cofactor evidence="1">
        <name>Mg(2+)</name>
        <dbReference type="ChEBI" id="CHEBI:18420"/>
    </cofactor>
</comment>
<comment type="similarity">
    <text evidence="1">Belongs to the TRAFAC class TrmE-Era-EngA-EngB-Septin-like GTPase superfamily. EngB GTPase family.</text>
</comment>
<proteinExistence type="inferred from homology"/>
<keyword id="KW-0131">Cell cycle</keyword>
<keyword id="KW-0132">Cell division</keyword>
<keyword id="KW-0342">GTP-binding</keyword>
<keyword id="KW-0460">Magnesium</keyword>
<keyword id="KW-0479">Metal-binding</keyword>
<keyword id="KW-0547">Nucleotide-binding</keyword>
<keyword id="KW-0717">Septation</keyword>
<feature type="chain" id="PRO_1000189938" description="Probable GTP-binding protein EngB">
    <location>
        <begin position="1"/>
        <end position="195"/>
    </location>
</feature>
<feature type="domain" description="EngB-type G" evidence="1">
    <location>
        <begin position="24"/>
        <end position="195"/>
    </location>
</feature>
<feature type="binding site" evidence="1">
    <location>
        <begin position="32"/>
        <end position="39"/>
    </location>
    <ligand>
        <name>GTP</name>
        <dbReference type="ChEBI" id="CHEBI:37565"/>
    </ligand>
</feature>
<feature type="binding site" evidence="1">
    <location>
        <position position="39"/>
    </location>
    <ligand>
        <name>Mg(2+)</name>
        <dbReference type="ChEBI" id="CHEBI:18420"/>
    </ligand>
</feature>
<feature type="binding site" evidence="1">
    <location>
        <begin position="59"/>
        <end position="63"/>
    </location>
    <ligand>
        <name>GTP</name>
        <dbReference type="ChEBI" id="CHEBI:37565"/>
    </ligand>
</feature>
<feature type="binding site" evidence="1">
    <location>
        <position position="61"/>
    </location>
    <ligand>
        <name>Mg(2+)</name>
        <dbReference type="ChEBI" id="CHEBI:18420"/>
    </ligand>
</feature>
<feature type="binding site" evidence="1">
    <location>
        <begin position="77"/>
        <end position="80"/>
    </location>
    <ligand>
        <name>GTP</name>
        <dbReference type="ChEBI" id="CHEBI:37565"/>
    </ligand>
</feature>
<feature type="binding site" evidence="1">
    <location>
        <begin position="144"/>
        <end position="147"/>
    </location>
    <ligand>
        <name>GTP</name>
        <dbReference type="ChEBI" id="CHEBI:37565"/>
    </ligand>
</feature>
<feature type="binding site" evidence="1">
    <location>
        <begin position="176"/>
        <end position="178"/>
    </location>
    <ligand>
        <name>GTP</name>
        <dbReference type="ChEBI" id="CHEBI:37565"/>
    </ligand>
</feature>
<accession>C1CFF1</accession>
<organism>
    <name type="scientific">Streptococcus pneumoniae (strain JJA)</name>
    <dbReference type="NCBI Taxonomy" id="488222"/>
    <lineage>
        <taxon>Bacteria</taxon>
        <taxon>Bacillati</taxon>
        <taxon>Bacillota</taxon>
        <taxon>Bacilli</taxon>
        <taxon>Lactobacillales</taxon>
        <taxon>Streptococcaceae</taxon>
        <taxon>Streptococcus</taxon>
    </lineage>
</organism>
<reference key="1">
    <citation type="journal article" date="2010" name="Genome Biol.">
        <title>Structure and dynamics of the pan-genome of Streptococcus pneumoniae and closely related species.</title>
        <authorList>
            <person name="Donati C."/>
            <person name="Hiller N.L."/>
            <person name="Tettelin H."/>
            <person name="Muzzi A."/>
            <person name="Croucher N.J."/>
            <person name="Angiuoli S.V."/>
            <person name="Oggioni M."/>
            <person name="Dunning Hotopp J.C."/>
            <person name="Hu F.Z."/>
            <person name="Riley D.R."/>
            <person name="Covacci A."/>
            <person name="Mitchell T.J."/>
            <person name="Bentley S.D."/>
            <person name="Kilian M."/>
            <person name="Ehrlich G.D."/>
            <person name="Rappuoli R."/>
            <person name="Moxon E.R."/>
            <person name="Masignani V."/>
        </authorList>
    </citation>
    <scope>NUCLEOTIDE SEQUENCE [LARGE SCALE GENOMIC DNA]</scope>
    <source>
        <strain>JJA</strain>
    </source>
</reference>
<sequence length="195" mass="22229">MELNTHNAEILLSAANKSHYPQDELPEIALAGRSNVGKSSFINTMLNRKNLARTSGKPGKTQLLNFFNIDDKMRFVDVPGYGYARVSKKEREKWGCMIEEYLTTRENLRAVVSLVDLRHAPSADDVQMYEFLKYYEIPVIIVATKADKIPRGKWNKHESAIKKKLNFDPSDDFILFSSVSKAGMDEAWDAILEKL</sequence>
<name>ENGB_STRZJ</name>